<proteinExistence type="predicted"/>
<accession>A0AAN2L0P5</accession>
<feature type="chain" id="PRO_0000462476" description="Uncharacterized protein SPCC794.16">
    <location>
        <begin position="1"/>
        <end position="195"/>
    </location>
</feature>
<sequence>MLSLAYHTLEQVSDKVLLRKSSYNLTDDDLQAVVNCTTTILEQRAVIDQIAYLGQKYYWVSVDGYNNNNYTISDEMENLLRQCINNYDDRANVALVTHNVYAVSGSHSELQLQEHYDYFGYGLPEDYDGQSSEYYDTDLDVVTDSSIQLSRRSGNKPDTINDNSWSRYGVALAFYLFTNGVQYVATKHTPWCGKC</sequence>
<dbReference type="EMBL" id="CU329672">
    <property type="protein sequence ID" value="CAK9841285.1"/>
    <property type="molecule type" value="Genomic_DNA"/>
</dbReference>
<dbReference type="PomBase" id="SPCC794.16"/>
<dbReference type="Proteomes" id="UP000002485">
    <property type="component" value="Chromosome III"/>
</dbReference>
<gene>
    <name evidence="2" type="ORF">SPCC794.16</name>
</gene>
<organism>
    <name type="scientific">Schizosaccharomyces pombe (strain 972 / ATCC 24843)</name>
    <name type="common">Fission yeast</name>
    <dbReference type="NCBI Taxonomy" id="284812"/>
    <lineage>
        <taxon>Eukaryota</taxon>
        <taxon>Fungi</taxon>
        <taxon>Dikarya</taxon>
        <taxon>Ascomycota</taxon>
        <taxon>Taphrinomycotina</taxon>
        <taxon>Schizosaccharomycetes</taxon>
        <taxon>Schizosaccharomycetales</taxon>
        <taxon>Schizosaccharomycetaceae</taxon>
        <taxon>Schizosaccharomyces</taxon>
    </lineage>
</organism>
<evidence type="ECO:0000305" key="1"/>
<evidence type="ECO:0000312" key="2">
    <source>
        <dbReference type="PomBase" id="SPCC794.16"/>
    </source>
</evidence>
<reference key="1">
    <citation type="journal article" date="2002" name="Nature">
        <title>The genome sequence of Schizosaccharomyces pombe.</title>
        <authorList>
            <person name="Wood V."/>
            <person name="Gwilliam R."/>
            <person name="Rajandream M.A."/>
            <person name="Lyne M.H."/>
            <person name="Lyne R."/>
            <person name="Stewart A."/>
            <person name="Sgouros J.G."/>
            <person name="Peat N."/>
            <person name="Hayles J."/>
            <person name="Baker S.G."/>
            <person name="Basham D."/>
            <person name="Bowman S."/>
            <person name="Brooks K."/>
            <person name="Brown D."/>
            <person name="Brown S."/>
            <person name="Chillingworth T."/>
            <person name="Churcher C.M."/>
            <person name="Collins M."/>
            <person name="Connor R."/>
            <person name="Cronin A."/>
            <person name="Davis P."/>
            <person name="Feltwell T."/>
            <person name="Fraser A."/>
            <person name="Gentles S."/>
            <person name="Goble A."/>
            <person name="Hamlin N."/>
            <person name="Harris D.E."/>
            <person name="Hidalgo J."/>
            <person name="Hodgson G."/>
            <person name="Holroyd S."/>
            <person name="Hornsby T."/>
            <person name="Howarth S."/>
            <person name="Huckle E.J."/>
            <person name="Hunt S."/>
            <person name="Jagels K."/>
            <person name="James K.D."/>
            <person name="Jones L."/>
            <person name="Jones M."/>
            <person name="Leather S."/>
            <person name="McDonald S."/>
            <person name="McLean J."/>
            <person name="Mooney P."/>
            <person name="Moule S."/>
            <person name="Mungall K.L."/>
            <person name="Murphy L.D."/>
            <person name="Niblett D."/>
            <person name="Odell C."/>
            <person name="Oliver K."/>
            <person name="O'Neil S."/>
            <person name="Pearson D."/>
            <person name="Quail M.A."/>
            <person name="Rabbinowitsch E."/>
            <person name="Rutherford K.M."/>
            <person name="Rutter S."/>
            <person name="Saunders D."/>
            <person name="Seeger K."/>
            <person name="Sharp S."/>
            <person name="Skelton J."/>
            <person name="Simmonds M.N."/>
            <person name="Squares R."/>
            <person name="Squares S."/>
            <person name="Stevens K."/>
            <person name="Taylor K."/>
            <person name="Taylor R.G."/>
            <person name="Tivey A."/>
            <person name="Walsh S.V."/>
            <person name="Warren T."/>
            <person name="Whitehead S."/>
            <person name="Woodward J.R."/>
            <person name="Volckaert G."/>
            <person name="Aert R."/>
            <person name="Robben J."/>
            <person name="Grymonprez B."/>
            <person name="Weltjens I."/>
            <person name="Vanstreels E."/>
            <person name="Rieger M."/>
            <person name="Schaefer M."/>
            <person name="Mueller-Auer S."/>
            <person name="Gabel C."/>
            <person name="Fuchs M."/>
            <person name="Duesterhoeft A."/>
            <person name="Fritzc C."/>
            <person name="Holzer E."/>
            <person name="Moestl D."/>
            <person name="Hilbert H."/>
            <person name="Borzym K."/>
            <person name="Langer I."/>
            <person name="Beck A."/>
            <person name="Lehrach H."/>
            <person name="Reinhardt R."/>
            <person name="Pohl T.M."/>
            <person name="Eger P."/>
            <person name="Zimmermann W."/>
            <person name="Wedler H."/>
            <person name="Wambutt R."/>
            <person name="Purnelle B."/>
            <person name="Goffeau A."/>
            <person name="Cadieu E."/>
            <person name="Dreano S."/>
            <person name="Gloux S."/>
            <person name="Lelaure V."/>
            <person name="Mottier S."/>
            <person name="Galibert F."/>
            <person name="Aves S.J."/>
            <person name="Xiang Z."/>
            <person name="Hunt C."/>
            <person name="Moore K."/>
            <person name="Hurst S.M."/>
            <person name="Lucas M."/>
            <person name="Rochet M."/>
            <person name="Gaillardin C."/>
            <person name="Tallada V.A."/>
            <person name="Garzon A."/>
            <person name="Thode G."/>
            <person name="Daga R.R."/>
            <person name="Cruzado L."/>
            <person name="Jimenez J."/>
            <person name="Sanchez M."/>
            <person name="del Rey F."/>
            <person name="Benito J."/>
            <person name="Dominguez A."/>
            <person name="Revuelta J.L."/>
            <person name="Moreno S."/>
            <person name="Armstrong J."/>
            <person name="Forsburg S.L."/>
            <person name="Cerutti L."/>
            <person name="Lowe T."/>
            <person name="McCombie W.R."/>
            <person name="Paulsen I."/>
            <person name="Potashkin J."/>
            <person name="Shpakovski G.V."/>
            <person name="Ussery D."/>
            <person name="Barrell B.G."/>
            <person name="Nurse P."/>
        </authorList>
    </citation>
    <scope>NUCLEOTIDE SEQUENCE [LARGE SCALE GENOMIC DNA]</scope>
    <source>
        <strain>972 / ATCC 24843</strain>
    </source>
</reference>
<name>YCTG_SCHPO</name>
<protein>
    <recommendedName>
        <fullName evidence="1">Uncharacterized protein SPCC794.16</fullName>
    </recommendedName>
</protein>
<keyword id="KW-1185">Reference proteome</keyword>